<comment type="function">
    <text evidence="1">Catalyzes the decarboxylation of orotidine 5'-monophosphate (OMP) to uridine 5'-monophosphate (UMP).</text>
</comment>
<comment type="catalytic activity">
    <reaction evidence="1">
        <text>orotidine 5'-phosphate + H(+) = UMP + CO2</text>
        <dbReference type="Rhea" id="RHEA:11596"/>
        <dbReference type="ChEBI" id="CHEBI:15378"/>
        <dbReference type="ChEBI" id="CHEBI:16526"/>
        <dbReference type="ChEBI" id="CHEBI:57538"/>
        <dbReference type="ChEBI" id="CHEBI:57865"/>
        <dbReference type="EC" id="4.1.1.23"/>
    </reaction>
</comment>
<comment type="pathway">
    <text evidence="1">Pyrimidine metabolism; UMP biosynthesis via de novo pathway; UMP from orotate: step 2/2.</text>
</comment>
<comment type="subunit">
    <text evidence="1">Homodimer.</text>
</comment>
<comment type="similarity">
    <text evidence="1">Belongs to the OMP decarboxylase family. Type 1 subfamily.</text>
</comment>
<keyword id="KW-0210">Decarboxylase</keyword>
<keyword id="KW-0456">Lyase</keyword>
<keyword id="KW-0665">Pyrimidine biosynthesis</keyword>
<keyword id="KW-1185">Reference proteome</keyword>
<sequence>MSQSLIVALDFPGKQDVEQFLRHFEGEELFVKVGMELFYKEGPAIITYLKEKGHKIFLDLKLHDIPNTVKSAMRSLASLDVDMVNVHAGGGSSMMKAAIEGLEEGKQEGKERPICIAVTQLTSTSETMMKKEIGIEKTLEEAVAHYAKLTKESGLDGVVCSTLEVPKLREVCGSEFVTVTPGIRLASDDVNDQVRVATPKRARELGSSYIVVGRSITKAENPLEAYKTVKQQWEGVTV</sequence>
<feature type="chain" id="PRO_0000134523" description="Orotidine 5'-phosphate decarboxylase">
    <location>
        <begin position="1"/>
        <end position="238"/>
    </location>
</feature>
<feature type="active site" description="Proton donor" evidence="1">
    <location>
        <position position="61"/>
    </location>
</feature>
<feature type="binding site" evidence="1">
    <location>
        <position position="10"/>
    </location>
    <ligand>
        <name>substrate</name>
    </ligand>
</feature>
<feature type="binding site" evidence="1">
    <location>
        <position position="32"/>
    </location>
    <ligand>
        <name>substrate</name>
    </ligand>
</feature>
<feature type="binding site" evidence="1">
    <location>
        <begin position="59"/>
        <end position="68"/>
    </location>
    <ligand>
        <name>substrate</name>
    </ligand>
</feature>
<feature type="binding site" evidence="1">
    <location>
        <position position="122"/>
    </location>
    <ligand>
        <name>substrate</name>
    </ligand>
</feature>
<feature type="binding site" evidence="1">
    <location>
        <position position="184"/>
    </location>
    <ligand>
        <name>substrate</name>
    </ligand>
</feature>
<feature type="binding site" evidence="1">
    <location>
        <position position="193"/>
    </location>
    <ligand>
        <name>substrate</name>
    </ligand>
</feature>
<feature type="binding site" evidence="1">
    <location>
        <position position="213"/>
    </location>
    <ligand>
        <name>substrate</name>
    </ligand>
</feature>
<feature type="binding site" evidence="1">
    <location>
        <position position="214"/>
    </location>
    <ligand>
        <name>substrate</name>
    </ligand>
</feature>
<reference key="1">
    <citation type="journal article" date="2003" name="Nature">
        <title>The genome sequence of Bacillus anthracis Ames and comparison to closely related bacteria.</title>
        <authorList>
            <person name="Read T.D."/>
            <person name="Peterson S.N."/>
            <person name="Tourasse N.J."/>
            <person name="Baillie L.W."/>
            <person name="Paulsen I.T."/>
            <person name="Nelson K.E."/>
            <person name="Tettelin H."/>
            <person name="Fouts D.E."/>
            <person name="Eisen J.A."/>
            <person name="Gill S.R."/>
            <person name="Holtzapple E.K."/>
            <person name="Okstad O.A."/>
            <person name="Helgason E."/>
            <person name="Rilstone J."/>
            <person name="Wu M."/>
            <person name="Kolonay J.F."/>
            <person name="Beanan M.J."/>
            <person name="Dodson R.J."/>
            <person name="Brinkac L.M."/>
            <person name="Gwinn M.L."/>
            <person name="DeBoy R.T."/>
            <person name="Madpu R."/>
            <person name="Daugherty S.C."/>
            <person name="Durkin A.S."/>
            <person name="Haft D.H."/>
            <person name="Nelson W.C."/>
            <person name="Peterson J.D."/>
            <person name="Pop M."/>
            <person name="Khouri H.M."/>
            <person name="Radune D."/>
            <person name="Benton J.L."/>
            <person name="Mahamoud Y."/>
            <person name="Jiang L."/>
            <person name="Hance I.R."/>
            <person name="Weidman J.F."/>
            <person name="Berry K.J."/>
            <person name="Plaut R.D."/>
            <person name="Wolf A.M."/>
            <person name="Watkins K.L."/>
            <person name="Nierman W.C."/>
            <person name="Hazen A."/>
            <person name="Cline R.T."/>
            <person name="Redmond C."/>
            <person name="Thwaite J.E."/>
            <person name="White O."/>
            <person name="Salzberg S.L."/>
            <person name="Thomason B."/>
            <person name="Friedlander A.M."/>
            <person name="Koehler T.M."/>
            <person name="Hanna P.C."/>
            <person name="Kolstoe A.-B."/>
            <person name="Fraser C.M."/>
        </authorList>
    </citation>
    <scope>NUCLEOTIDE SEQUENCE [LARGE SCALE GENOMIC DNA]</scope>
    <source>
        <strain>Ames / isolate Porton</strain>
    </source>
</reference>
<reference key="2">
    <citation type="journal article" date="2009" name="J. Bacteriol.">
        <title>The complete genome sequence of Bacillus anthracis Ames 'Ancestor'.</title>
        <authorList>
            <person name="Ravel J."/>
            <person name="Jiang L."/>
            <person name="Stanley S.T."/>
            <person name="Wilson M.R."/>
            <person name="Decker R.S."/>
            <person name="Read T.D."/>
            <person name="Worsham P."/>
            <person name="Keim P.S."/>
            <person name="Salzberg S.L."/>
            <person name="Fraser-Liggett C.M."/>
            <person name="Rasko D.A."/>
        </authorList>
    </citation>
    <scope>NUCLEOTIDE SEQUENCE [LARGE SCALE GENOMIC DNA]</scope>
    <source>
        <strain>Ames ancestor</strain>
    </source>
</reference>
<reference key="3">
    <citation type="submission" date="2004-01" db="EMBL/GenBank/DDBJ databases">
        <title>Complete genome sequence of Bacillus anthracis Sterne.</title>
        <authorList>
            <person name="Brettin T.S."/>
            <person name="Bruce D."/>
            <person name="Challacombe J.F."/>
            <person name="Gilna P."/>
            <person name="Han C."/>
            <person name="Hill K."/>
            <person name="Hitchcock P."/>
            <person name="Jackson P."/>
            <person name="Keim P."/>
            <person name="Longmire J."/>
            <person name="Lucas S."/>
            <person name="Okinaka R."/>
            <person name="Richardson P."/>
            <person name="Rubin E."/>
            <person name="Tice H."/>
        </authorList>
    </citation>
    <scope>NUCLEOTIDE SEQUENCE [LARGE SCALE GENOMIC DNA]</scope>
    <source>
        <strain>Sterne</strain>
    </source>
</reference>
<protein>
    <recommendedName>
        <fullName evidence="1">Orotidine 5'-phosphate decarboxylase</fullName>
        <ecNumber evidence="1">4.1.1.23</ecNumber>
    </recommendedName>
    <alternativeName>
        <fullName evidence="1">OMP decarboxylase</fullName>
        <shortName evidence="1">OMPDCase</shortName>
        <shortName evidence="1">OMPdecase</shortName>
    </alternativeName>
</protein>
<name>PYRF_BACAN</name>
<proteinExistence type="inferred from homology"/>
<organism>
    <name type="scientific">Bacillus anthracis</name>
    <dbReference type="NCBI Taxonomy" id="1392"/>
    <lineage>
        <taxon>Bacteria</taxon>
        <taxon>Bacillati</taxon>
        <taxon>Bacillota</taxon>
        <taxon>Bacilli</taxon>
        <taxon>Bacillales</taxon>
        <taxon>Bacillaceae</taxon>
        <taxon>Bacillus</taxon>
        <taxon>Bacillus cereus group</taxon>
    </lineage>
</organism>
<evidence type="ECO:0000255" key="1">
    <source>
        <dbReference type="HAMAP-Rule" id="MF_01200"/>
    </source>
</evidence>
<accession>Q81WF5</accession>
<accession>Q6HUK3</accession>
<accession>Q6KNT8</accession>
<dbReference type="EC" id="4.1.1.23" evidence="1"/>
<dbReference type="EMBL" id="AE016879">
    <property type="protein sequence ID" value="AAP27749.1"/>
    <property type="molecule type" value="Genomic_DNA"/>
</dbReference>
<dbReference type="EMBL" id="AE017334">
    <property type="protein sequence ID" value="AAT33139.1"/>
    <property type="molecule type" value="Genomic_DNA"/>
</dbReference>
<dbReference type="EMBL" id="AE017225">
    <property type="protein sequence ID" value="AAT56036.1"/>
    <property type="molecule type" value="Genomic_DNA"/>
</dbReference>
<dbReference type="RefSeq" id="NP_846263.1">
    <property type="nucleotide sequence ID" value="NC_003997.3"/>
</dbReference>
<dbReference type="RefSeq" id="WP_000083503.1">
    <property type="nucleotide sequence ID" value="NZ_WXXJ01000026.1"/>
</dbReference>
<dbReference type="RefSeq" id="YP_029985.1">
    <property type="nucleotide sequence ID" value="NC_005945.1"/>
</dbReference>
<dbReference type="SMR" id="Q81WF5"/>
<dbReference type="STRING" id="261594.GBAA_4022"/>
<dbReference type="DNASU" id="1086616"/>
<dbReference type="GeneID" id="45023712"/>
<dbReference type="KEGG" id="ban:BA_4022"/>
<dbReference type="KEGG" id="bar:GBAA_4022"/>
<dbReference type="KEGG" id="bat:BAS3734"/>
<dbReference type="PATRIC" id="fig|198094.11.peg.3993"/>
<dbReference type="eggNOG" id="COG0284">
    <property type="taxonomic scope" value="Bacteria"/>
</dbReference>
<dbReference type="HOGENOM" id="CLU_067069_1_1_9"/>
<dbReference type="OMA" id="FWKVGLE"/>
<dbReference type="OrthoDB" id="9806203at2"/>
<dbReference type="UniPathway" id="UPA00070">
    <property type="reaction ID" value="UER00120"/>
</dbReference>
<dbReference type="Proteomes" id="UP000000427">
    <property type="component" value="Chromosome"/>
</dbReference>
<dbReference type="Proteomes" id="UP000000594">
    <property type="component" value="Chromosome"/>
</dbReference>
<dbReference type="GO" id="GO:0005829">
    <property type="term" value="C:cytosol"/>
    <property type="evidence" value="ECO:0007669"/>
    <property type="project" value="TreeGrafter"/>
</dbReference>
<dbReference type="GO" id="GO:0004590">
    <property type="term" value="F:orotidine-5'-phosphate decarboxylase activity"/>
    <property type="evidence" value="ECO:0007669"/>
    <property type="project" value="UniProtKB-UniRule"/>
</dbReference>
<dbReference type="GO" id="GO:0006207">
    <property type="term" value="P:'de novo' pyrimidine nucleobase biosynthetic process"/>
    <property type="evidence" value="ECO:0007669"/>
    <property type="project" value="InterPro"/>
</dbReference>
<dbReference type="GO" id="GO:0044205">
    <property type="term" value="P:'de novo' UMP biosynthetic process"/>
    <property type="evidence" value="ECO:0007669"/>
    <property type="project" value="UniProtKB-UniRule"/>
</dbReference>
<dbReference type="CDD" id="cd04725">
    <property type="entry name" value="OMP_decarboxylase_like"/>
    <property type="match status" value="1"/>
</dbReference>
<dbReference type="FunFam" id="3.20.20.70:FF:000015">
    <property type="entry name" value="Orotidine 5'-phosphate decarboxylase"/>
    <property type="match status" value="1"/>
</dbReference>
<dbReference type="Gene3D" id="3.20.20.70">
    <property type="entry name" value="Aldolase class I"/>
    <property type="match status" value="1"/>
</dbReference>
<dbReference type="HAMAP" id="MF_01200_B">
    <property type="entry name" value="OMPdecase_type1_B"/>
    <property type="match status" value="1"/>
</dbReference>
<dbReference type="InterPro" id="IPR013785">
    <property type="entry name" value="Aldolase_TIM"/>
</dbReference>
<dbReference type="InterPro" id="IPR014732">
    <property type="entry name" value="OMPdecase"/>
</dbReference>
<dbReference type="InterPro" id="IPR018089">
    <property type="entry name" value="OMPdecase_AS"/>
</dbReference>
<dbReference type="InterPro" id="IPR047596">
    <property type="entry name" value="OMPdecase_bac"/>
</dbReference>
<dbReference type="InterPro" id="IPR001754">
    <property type="entry name" value="OMPdeCOase_dom"/>
</dbReference>
<dbReference type="InterPro" id="IPR011060">
    <property type="entry name" value="RibuloseP-bd_barrel"/>
</dbReference>
<dbReference type="NCBIfam" id="NF001273">
    <property type="entry name" value="PRK00230.1"/>
    <property type="match status" value="1"/>
</dbReference>
<dbReference type="NCBIfam" id="TIGR01740">
    <property type="entry name" value="pyrF"/>
    <property type="match status" value="1"/>
</dbReference>
<dbReference type="PANTHER" id="PTHR32119">
    <property type="entry name" value="OROTIDINE 5'-PHOSPHATE DECARBOXYLASE"/>
    <property type="match status" value="1"/>
</dbReference>
<dbReference type="PANTHER" id="PTHR32119:SF2">
    <property type="entry name" value="OROTIDINE 5'-PHOSPHATE DECARBOXYLASE"/>
    <property type="match status" value="1"/>
</dbReference>
<dbReference type="Pfam" id="PF00215">
    <property type="entry name" value="OMPdecase"/>
    <property type="match status" value="1"/>
</dbReference>
<dbReference type="SMART" id="SM00934">
    <property type="entry name" value="OMPdecase"/>
    <property type="match status" value="1"/>
</dbReference>
<dbReference type="SUPFAM" id="SSF51366">
    <property type="entry name" value="Ribulose-phoshate binding barrel"/>
    <property type="match status" value="1"/>
</dbReference>
<dbReference type="PROSITE" id="PS00156">
    <property type="entry name" value="OMPDECASE"/>
    <property type="match status" value="1"/>
</dbReference>
<gene>
    <name evidence="1" type="primary">pyrF</name>
    <name type="ordered locus">BA_4022</name>
    <name type="ordered locus">GBAA_4022</name>
    <name type="ordered locus">BAS3734</name>
</gene>